<gene>
    <name evidence="1" type="primary">rnfD</name>
    <name type="ordered locus">AHA_2637</name>
</gene>
<comment type="function">
    <text evidence="1">Part of a membrane-bound complex that couples electron transfer with translocation of ions across the membrane.</text>
</comment>
<comment type="cofactor">
    <cofactor evidence="1">
        <name>FMN</name>
        <dbReference type="ChEBI" id="CHEBI:58210"/>
    </cofactor>
</comment>
<comment type="subunit">
    <text evidence="1">The complex is composed of six subunits: RnfA, RnfB, RnfC, RnfD, RnfE and RnfG.</text>
</comment>
<comment type="subcellular location">
    <subcellularLocation>
        <location evidence="1">Cell inner membrane</location>
        <topology evidence="1">Multi-pass membrane protein</topology>
    </subcellularLocation>
</comment>
<comment type="similarity">
    <text evidence="1">Belongs to the NqrB/RnfD family.</text>
</comment>
<proteinExistence type="inferred from homology"/>
<dbReference type="EC" id="7.-.-.-" evidence="1"/>
<dbReference type="EMBL" id="CP000462">
    <property type="protein sequence ID" value="ABK38304.1"/>
    <property type="molecule type" value="Genomic_DNA"/>
</dbReference>
<dbReference type="RefSeq" id="YP_857146.1">
    <property type="nucleotide sequence ID" value="NC_008570.1"/>
</dbReference>
<dbReference type="SMR" id="A0KLJ5"/>
<dbReference type="STRING" id="380703.AHA_2637"/>
<dbReference type="EnsemblBacteria" id="ABK38304">
    <property type="protein sequence ID" value="ABK38304"/>
    <property type="gene ID" value="AHA_2637"/>
</dbReference>
<dbReference type="GeneID" id="4490095"/>
<dbReference type="KEGG" id="aha:AHA_2637"/>
<dbReference type="PATRIC" id="fig|380703.7.peg.2640"/>
<dbReference type="eggNOG" id="COG4658">
    <property type="taxonomic scope" value="Bacteria"/>
</dbReference>
<dbReference type="HOGENOM" id="CLU_042020_0_0_6"/>
<dbReference type="OrthoDB" id="9776359at2"/>
<dbReference type="Proteomes" id="UP000000756">
    <property type="component" value="Chromosome"/>
</dbReference>
<dbReference type="GO" id="GO:0005886">
    <property type="term" value="C:plasma membrane"/>
    <property type="evidence" value="ECO:0007669"/>
    <property type="project" value="UniProtKB-SubCell"/>
</dbReference>
<dbReference type="GO" id="GO:0022900">
    <property type="term" value="P:electron transport chain"/>
    <property type="evidence" value="ECO:0007669"/>
    <property type="project" value="UniProtKB-UniRule"/>
</dbReference>
<dbReference type="GO" id="GO:0055085">
    <property type="term" value="P:transmembrane transport"/>
    <property type="evidence" value="ECO:0007669"/>
    <property type="project" value="InterPro"/>
</dbReference>
<dbReference type="HAMAP" id="MF_00462">
    <property type="entry name" value="RsxD_RnfD"/>
    <property type="match status" value="1"/>
</dbReference>
<dbReference type="InterPro" id="IPR004338">
    <property type="entry name" value="NqrB/RnfD"/>
</dbReference>
<dbReference type="InterPro" id="IPR011303">
    <property type="entry name" value="RnfD_bac"/>
</dbReference>
<dbReference type="NCBIfam" id="NF002011">
    <property type="entry name" value="PRK00816.1"/>
    <property type="match status" value="1"/>
</dbReference>
<dbReference type="NCBIfam" id="TIGR01946">
    <property type="entry name" value="rnfD"/>
    <property type="match status" value="1"/>
</dbReference>
<dbReference type="PANTHER" id="PTHR30578">
    <property type="entry name" value="ELECTRON TRANSPORT COMPLEX PROTEIN RNFD"/>
    <property type="match status" value="1"/>
</dbReference>
<dbReference type="PANTHER" id="PTHR30578:SF0">
    <property type="entry name" value="ION-TRANSLOCATING OXIDOREDUCTASE COMPLEX SUBUNIT D"/>
    <property type="match status" value="1"/>
</dbReference>
<dbReference type="Pfam" id="PF03116">
    <property type="entry name" value="NQR2_RnfD_RnfE"/>
    <property type="match status" value="1"/>
</dbReference>
<sequence>MFNIASAPFAHNRKQTQTLMLLVILACLPGFLAQSWFFGWGTLIQILLALVTALGSEALVLRLRGRPVKPALLDGSAALTAVLIGLSLPPLLPWWMLVLGTAFAIIIAKHLYGGLGQNLFNPAMVAYVLLLVSFPVQMTSWLPPSSIAAYDIGFGDAASVIFTGFSLDGYSMAQLKQGVDGLTMATPLDTLKTGLTQGLTAGEVMTHTVFEGWGGIGWSWVNLGYLLGGLFLLQQKVINWRIPGAILGSLLLAATLGYLMTPDATATPMFHLFSGATMLGAFFIATDPVSASTTPRGRLVYGVLIGVLVYVIRRFGGYPDAFAFAVLLANLCVPLIDSLTRPKVYGARRK</sequence>
<name>RNFD_AERHH</name>
<accession>A0KLJ5</accession>
<evidence type="ECO:0000255" key="1">
    <source>
        <dbReference type="HAMAP-Rule" id="MF_00462"/>
    </source>
</evidence>
<protein>
    <recommendedName>
        <fullName evidence="1">Ion-translocating oxidoreductase complex subunit D</fullName>
        <ecNumber evidence="1">7.-.-.-</ecNumber>
    </recommendedName>
    <alternativeName>
        <fullName evidence="1">Rnf electron transport complex subunit D</fullName>
    </alternativeName>
</protein>
<organism>
    <name type="scientific">Aeromonas hydrophila subsp. hydrophila (strain ATCC 7966 / DSM 30187 / BCRC 13018 / CCUG 14551 / JCM 1027 / KCTC 2358 / NCIMB 9240 / NCTC 8049)</name>
    <dbReference type="NCBI Taxonomy" id="380703"/>
    <lineage>
        <taxon>Bacteria</taxon>
        <taxon>Pseudomonadati</taxon>
        <taxon>Pseudomonadota</taxon>
        <taxon>Gammaproteobacteria</taxon>
        <taxon>Aeromonadales</taxon>
        <taxon>Aeromonadaceae</taxon>
        <taxon>Aeromonas</taxon>
    </lineage>
</organism>
<reference key="1">
    <citation type="journal article" date="2006" name="J. Bacteriol.">
        <title>Genome sequence of Aeromonas hydrophila ATCC 7966T: jack of all trades.</title>
        <authorList>
            <person name="Seshadri R."/>
            <person name="Joseph S.W."/>
            <person name="Chopra A.K."/>
            <person name="Sha J."/>
            <person name="Shaw J."/>
            <person name="Graf J."/>
            <person name="Haft D.H."/>
            <person name="Wu M."/>
            <person name="Ren Q."/>
            <person name="Rosovitz M.J."/>
            <person name="Madupu R."/>
            <person name="Tallon L."/>
            <person name="Kim M."/>
            <person name="Jin S."/>
            <person name="Vuong H."/>
            <person name="Stine O.C."/>
            <person name="Ali A."/>
            <person name="Horneman A.J."/>
            <person name="Heidelberg J.F."/>
        </authorList>
    </citation>
    <scope>NUCLEOTIDE SEQUENCE [LARGE SCALE GENOMIC DNA]</scope>
    <source>
        <strain>ATCC 7966 / DSM 30187 / BCRC 13018 / CCUG 14551 / JCM 1027 / KCTC 2358 / NCIMB 9240 / NCTC 8049</strain>
    </source>
</reference>
<feature type="chain" id="PRO_1000013621" description="Ion-translocating oxidoreductase complex subunit D">
    <location>
        <begin position="1"/>
        <end position="350"/>
    </location>
</feature>
<feature type="transmembrane region" description="Helical" evidence="1">
    <location>
        <begin position="19"/>
        <end position="39"/>
    </location>
</feature>
<feature type="transmembrane region" description="Helical" evidence="1">
    <location>
        <begin position="41"/>
        <end position="61"/>
    </location>
</feature>
<feature type="transmembrane region" description="Helical" evidence="1">
    <location>
        <begin position="67"/>
        <end position="87"/>
    </location>
</feature>
<feature type="transmembrane region" description="Helical" evidence="1">
    <location>
        <begin position="88"/>
        <end position="108"/>
    </location>
</feature>
<feature type="transmembrane region" description="Helical" evidence="1">
    <location>
        <begin position="122"/>
        <end position="142"/>
    </location>
</feature>
<feature type="transmembrane region" description="Helical" evidence="1">
    <location>
        <begin position="213"/>
        <end position="233"/>
    </location>
</feature>
<feature type="transmembrane region" description="Helical" evidence="1">
    <location>
        <begin position="242"/>
        <end position="262"/>
    </location>
</feature>
<feature type="transmembrane region" description="Helical" evidence="1">
    <location>
        <begin position="264"/>
        <end position="284"/>
    </location>
</feature>
<feature type="transmembrane region" description="Helical" evidence="1">
    <location>
        <begin position="299"/>
        <end position="316"/>
    </location>
</feature>
<feature type="modified residue" description="FMN phosphoryl threonine" evidence="1">
    <location>
        <position position="186"/>
    </location>
</feature>
<keyword id="KW-0997">Cell inner membrane</keyword>
<keyword id="KW-1003">Cell membrane</keyword>
<keyword id="KW-0249">Electron transport</keyword>
<keyword id="KW-0285">Flavoprotein</keyword>
<keyword id="KW-0288">FMN</keyword>
<keyword id="KW-0472">Membrane</keyword>
<keyword id="KW-0597">Phosphoprotein</keyword>
<keyword id="KW-1185">Reference proteome</keyword>
<keyword id="KW-1278">Translocase</keyword>
<keyword id="KW-0812">Transmembrane</keyword>
<keyword id="KW-1133">Transmembrane helix</keyword>
<keyword id="KW-0813">Transport</keyword>